<comment type="function">
    <text>This protein promotes the GTP-dependent binding of aminoacyl-tRNA to the A-site of ribosomes during protein biosynthesis.</text>
</comment>
<comment type="subcellular location">
    <subcellularLocation>
        <location>Cytoplasm</location>
    </subcellularLocation>
</comment>
<comment type="similarity">
    <text evidence="2">Belongs to the TRAFAC class translation factor GTPase superfamily. Classic translation factor GTPase family. EF-Tu/EF-1A subfamily.</text>
</comment>
<sequence length="413" mass="45120">HVDSGKSTTTGHLIYKCGGIDKRTIEKFEKEAQEMGKGSFKYAWVLDKLKAERERGITIDIALWKFETAKYYVTIIDAPGHRDFIKNMITGTSQADCAVLIVAAGTGEFEAGISKNGQTREHALLAFTLGVKQLIVGVNKMDSTEPPYSESRFEEIKKEVSSYIKKIGYNPAAVAFVPISGWHGDNMLEASTKMPWFKGWNVERKEGKAEGKCLIEALDAILPPARPTDKALRLPLQDVYKIGGIGTVPVGRVETGILKPGTIVVFAPANITTEVKSVEMHHEALQEAVPGDNVGFNVKNVSVKELRRGYVAGDSKNNPPKGAADFTAQVIVLNHPGQISNGYTPVLDCHTAHIACKFAEIKEKVDRRTGKSTEDNPKSIKSGDAAIVNLVPSKPLCVESFQEFPPLGRFAVR</sequence>
<reference key="1">
    <citation type="journal article" date="1997" name="Mol. Biol. Evol.">
        <title>Phylogenetic utility of elongation factor-1 alpha in noctuoidea (Insecta: Lepidoptera): the limits of synonymous substitution.</title>
        <authorList>
            <person name="Mitchell A."/>
            <person name="Cho S."/>
            <person name="Regier J.C."/>
            <person name="Mitter C."/>
            <person name="Poole R.W."/>
            <person name="Matthews M."/>
        </authorList>
    </citation>
    <scope>NUCLEOTIDE SEQUENCE [GENOMIC DNA]</scope>
</reference>
<name>EF1A_ANIIF</name>
<proteinExistence type="inferred from homology"/>
<organism>
    <name type="scientific">Anicla infecta</name>
    <name type="common">Green cutworm moth</name>
    <dbReference type="NCBI Taxonomy" id="56372"/>
    <lineage>
        <taxon>Eukaryota</taxon>
        <taxon>Metazoa</taxon>
        <taxon>Ecdysozoa</taxon>
        <taxon>Arthropoda</taxon>
        <taxon>Hexapoda</taxon>
        <taxon>Insecta</taxon>
        <taxon>Pterygota</taxon>
        <taxon>Neoptera</taxon>
        <taxon>Endopterygota</taxon>
        <taxon>Lepidoptera</taxon>
        <taxon>Glossata</taxon>
        <taxon>Ditrysia</taxon>
        <taxon>Noctuoidea</taxon>
        <taxon>Noctuidae</taxon>
        <taxon>Noctuinae</taxon>
        <taxon>Noctuini</taxon>
        <taxon>Anicla</taxon>
    </lineage>
</organism>
<dbReference type="EMBL" id="U85703">
    <property type="protein sequence ID" value="AAC47619.1"/>
    <property type="molecule type" value="Genomic_DNA"/>
</dbReference>
<dbReference type="SMR" id="P84322"/>
<dbReference type="GO" id="GO:0005737">
    <property type="term" value="C:cytoplasm"/>
    <property type="evidence" value="ECO:0007669"/>
    <property type="project" value="UniProtKB-SubCell"/>
</dbReference>
<dbReference type="GO" id="GO:0005525">
    <property type="term" value="F:GTP binding"/>
    <property type="evidence" value="ECO:0007669"/>
    <property type="project" value="UniProtKB-KW"/>
</dbReference>
<dbReference type="GO" id="GO:0003924">
    <property type="term" value="F:GTPase activity"/>
    <property type="evidence" value="ECO:0007669"/>
    <property type="project" value="InterPro"/>
</dbReference>
<dbReference type="GO" id="GO:0003746">
    <property type="term" value="F:translation elongation factor activity"/>
    <property type="evidence" value="ECO:0007669"/>
    <property type="project" value="UniProtKB-KW"/>
</dbReference>
<dbReference type="CDD" id="cd01883">
    <property type="entry name" value="EF1_alpha"/>
    <property type="match status" value="1"/>
</dbReference>
<dbReference type="CDD" id="cd03693">
    <property type="entry name" value="EF1_alpha_II"/>
    <property type="match status" value="1"/>
</dbReference>
<dbReference type="CDD" id="cd03705">
    <property type="entry name" value="EF1_alpha_III"/>
    <property type="match status" value="1"/>
</dbReference>
<dbReference type="FunFam" id="2.40.30.10:FF:000003">
    <property type="entry name" value="Elongation factor 1-alpha"/>
    <property type="match status" value="1"/>
</dbReference>
<dbReference type="FunFam" id="2.40.30.10:FF:000005">
    <property type="entry name" value="Elongation factor 1-alpha"/>
    <property type="match status" value="1"/>
</dbReference>
<dbReference type="FunFam" id="3.40.50.300:FF:000090">
    <property type="entry name" value="Elongation factor 1-alpha"/>
    <property type="match status" value="1"/>
</dbReference>
<dbReference type="Gene3D" id="3.40.50.300">
    <property type="entry name" value="P-loop containing nucleotide triphosphate hydrolases"/>
    <property type="match status" value="1"/>
</dbReference>
<dbReference type="Gene3D" id="2.40.30.10">
    <property type="entry name" value="Translation factors"/>
    <property type="match status" value="2"/>
</dbReference>
<dbReference type="InterPro" id="IPR004161">
    <property type="entry name" value="EFTu-like_2"/>
</dbReference>
<dbReference type="InterPro" id="IPR031157">
    <property type="entry name" value="G_TR_CS"/>
</dbReference>
<dbReference type="InterPro" id="IPR054696">
    <property type="entry name" value="GTP-eEF1A_C"/>
</dbReference>
<dbReference type="InterPro" id="IPR027417">
    <property type="entry name" value="P-loop_NTPase"/>
</dbReference>
<dbReference type="InterPro" id="IPR000795">
    <property type="entry name" value="T_Tr_GTP-bd_dom"/>
</dbReference>
<dbReference type="InterPro" id="IPR050100">
    <property type="entry name" value="TRAFAC_GTPase_members"/>
</dbReference>
<dbReference type="InterPro" id="IPR009000">
    <property type="entry name" value="Transl_B-barrel_sf"/>
</dbReference>
<dbReference type="InterPro" id="IPR009001">
    <property type="entry name" value="Transl_elong_EF1A/Init_IF2_C"/>
</dbReference>
<dbReference type="InterPro" id="IPR004539">
    <property type="entry name" value="Transl_elong_EF1A_euk/arc"/>
</dbReference>
<dbReference type="NCBIfam" id="TIGR00483">
    <property type="entry name" value="EF-1_alpha"/>
    <property type="match status" value="1"/>
</dbReference>
<dbReference type="NCBIfam" id="NF008969">
    <property type="entry name" value="PRK12317.1"/>
    <property type="match status" value="1"/>
</dbReference>
<dbReference type="PANTHER" id="PTHR23115">
    <property type="entry name" value="TRANSLATION FACTOR"/>
    <property type="match status" value="1"/>
</dbReference>
<dbReference type="Pfam" id="PF22594">
    <property type="entry name" value="GTP-eEF1A_C"/>
    <property type="match status" value="1"/>
</dbReference>
<dbReference type="Pfam" id="PF00009">
    <property type="entry name" value="GTP_EFTU"/>
    <property type="match status" value="1"/>
</dbReference>
<dbReference type="Pfam" id="PF03144">
    <property type="entry name" value="GTP_EFTU_D2"/>
    <property type="match status" value="1"/>
</dbReference>
<dbReference type="PRINTS" id="PR00315">
    <property type="entry name" value="ELONGATNFCT"/>
</dbReference>
<dbReference type="SUPFAM" id="SSF50465">
    <property type="entry name" value="EF-Tu/eEF-1alpha/eIF2-gamma C-terminal domain"/>
    <property type="match status" value="1"/>
</dbReference>
<dbReference type="SUPFAM" id="SSF52540">
    <property type="entry name" value="P-loop containing nucleoside triphosphate hydrolases"/>
    <property type="match status" value="1"/>
</dbReference>
<dbReference type="SUPFAM" id="SSF50447">
    <property type="entry name" value="Translation proteins"/>
    <property type="match status" value="1"/>
</dbReference>
<dbReference type="PROSITE" id="PS00301">
    <property type="entry name" value="G_TR_1"/>
    <property type="match status" value="1"/>
</dbReference>
<dbReference type="PROSITE" id="PS51722">
    <property type="entry name" value="G_TR_2"/>
    <property type="match status" value="1"/>
</dbReference>
<keyword id="KW-0963">Cytoplasm</keyword>
<keyword id="KW-0251">Elongation factor</keyword>
<keyword id="KW-0342">GTP-binding</keyword>
<keyword id="KW-0547">Nucleotide-binding</keyword>
<keyword id="KW-0597">Phosphoprotein</keyword>
<keyword id="KW-0648">Protein biosynthesis</keyword>
<feature type="chain" id="PRO_0000090903" description="Elongation factor 1-alpha">
    <location>
        <begin position="1" status="less than"/>
        <end position="413" status="greater than"/>
    </location>
</feature>
<feature type="domain" description="tr-type G" evidence="2">
    <location>
        <begin position="1" status="less than"/>
        <end position="228"/>
    </location>
</feature>
<feature type="binding site" evidence="1">
    <location>
        <begin position="1" status="less than"/>
        <end position="7"/>
    </location>
    <ligand>
        <name>GTP</name>
        <dbReference type="ChEBI" id="CHEBI:37565"/>
    </ligand>
</feature>
<feature type="binding site" evidence="1">
    <location>
        <begin position="77"/>
        <end position="81"/>
    </location>
    <ligand>
        <name>GTP</name>
        <dbReference type="ChEBI" id="CHEBI:37565"/>
    </ligand>
</feature>
<feature type="binding site" evidence="1">
    <location>
        <begin position="139"/>
        <end position="142"/>
    </location>
    <ligand>
        <name>GTP</name>
        <dbReference type="ChEBI" id="CHEBI:37565"/>
    </ligand>
</feature>
<feature type="modified residue" description="5-glutamyl glycerylphosphorylethanolamine" evidence="1">
    <location>
        <position position="287"/>
    </location>
</feature>
<feature type="modified residue" description="5-glutamyl glycerylphosphorylethanolamine" evidence="1">
    <location>
        <position position="360"/>
    </location>
</feature>
<feature type="non-terminal residue">
    <location>
        <position position="1"/>
    </location>
</feature>
<feature type="non-terminal residue">
    <location>
        <position position="413"/>
    </location>
</feature>
<accession>P84322</accession>
<accession>P55276</accession>
<evidence type="ECO:0000250" key="1"/>
<evidence type="ECO:0000255" key="2">
    <source>
        <dbReference type="PROSITE-ProRule" id="PRU01059"/>
    </source>
</evidence>
<protein>
    <recommendedName>
        <fullName>Elongation factor 1-alpha</fullName>
        <shortName>EF-1-alpha</shortName>
    </recommendedName>
</protein>